<comment type="function">
    <text evidence="3">Acts as a component of the GARP complex that is involved in retrograde transport from early and late endosomes to the trans-Golgi network (TGN). The GARP complex facilitates tethering as well as SNARE complex assembly at the Golgi.</text>
</comment>
<comment type="subunit">
    <text evidence="3">Component of the Golgi-associated retrograde protein (GARP) complex, also called VFT (VPS fifty-three) complex, composed of vps-51, vps-52, vps-53 and vps-54. Within the complex interacts with vps-52 and vps-53 (PubMed:21613545).</text>
</comment>
<comment type="interaction">
    <interactant intactId="EBI-6395200">
        <id>Q22639</id>
    </interactant>
    <interactant intactId="EBI-318981">
        <id>G5EFV8</id>
        <label>vps-52</label>
    </interactant>
    <organismsDiffer>false</organismsDiffer>
    <experiments>5</experiments>
</comment>
<comment type="interaction">
    <interactant intactId="EBI-6395200">
        <id>Q22639</id>
    </interactant>
    <interactant intactId="EBI-6394890">
        <id>P34561</id>
        <label>vps-53</label>
    </interactant>
    <organismsDiffer>false</organismsDiffer>
    <experiments>5</experiments>
</comment>
<comment type="subcellular location">
    <subcellularLocation>
        <location evidence="1">Golgi apparatus</location>
        <location evidence="1">trans-Golgi network</location>
    </subcellularLocation>
</comment>
<comment type="disruption phenotype">
    <text evidence="3">Mutants are viable but display reduced brood size and enlarged lysosomes.</text>
</comment>
<comment type="similarity">
    <text evidence="4">Belongs to the VPS54 family.</text>
</comment>
<feature type="chain" id="PRO_0000148735" description="Vacuolar protein sorting-associated protein 54">
    <location>
        <begin position="1"/>
        <end position="1058"/>
    </location>
</feature>
<feature type="coiled-coil region" evidence="2">
    <location>
        <begin position="369"/>
        <end position="389"/>
    </location>
</feature>
<sequence length="1058" mass="119182">MKSMDDRTVGLISASSSRASLKIQPEIGYPRICDYCQPIIELMTASEFARHIRQDHTTKEGGSFLCRYGEHGVCQKLPLEGVCDLDFEAHIRRCHTSSQPAGYSSPTSSLVASYTEDSEETASLRSIRLTSDRDTPTIEKKKFTLHSFTQNLSAVLADPSRSRSDLTTFFTRHWGDSFVPTQPVPQSKRLARLADSAFDSYCQSAGESYRRYQAIKRALRLSHADGGVGIGDERQDAEDLPTIFIDPRFTLGDSSTFSDVFTVPANDDLDALKQTLSGRNVIPATPLEIATNRKPGEFRDYEALQNRLEMMHDVVDGRLAGKLVAKTDDFWQVVRSYSGLQEQLANALQCVMVVRKNLKRVDELVCDQSKKIVEVHERYEQKKKLLAKLHDISCLREAQSTVQMMLSQGDYPKAIECIETSLDVLSKELNGVTCFRHLASQLRELYTVIGRMMNEDFASLIQKELGVKPEAGTMIQAEGELSAVLLGLMRMRKYSFIAVLREEIIEGVKSVMRQVIKNQILNNGVDLNDFDPSLTQLGEPVRRMKHADFLKTVKAVMDEEFYFCKRLEALQDILLETVERANPLHRHGSEDIIVERIEEAKDIHESESDDEVGTTFSKSASSGGFSVGGSALSSNASATTLLSIEVRSEAFLRHVLPLIAEFGHQCAQQRISRLLIARAKNASVTEATTPTQLSECIKLVKEFQSKCDKEGWYSTQNQKVGGLGRSVNKLSMDYIEKFHAARKIRIGNMLDTELWKATDVSIVDQNIVDMAMETGQLRNTKRIDDGPIKKSFKRTESAVTIDSTTSTSNQIQGVIVDEENYVVVGSSITMIQLLSDYCEAISEMPSFSQDWNSRVVELLKTFNSRCCQLILGAGALQLVGLKTISVRNLALAGRSLELVCRFIPMVHDEMDRVLPENRKSLLRYFKQVESEYRDHVNEIAAKLISVIAHYTTNCLGMWDVKGVIPSPEFQQICRHMLKFHNGLVGIMPRDQIEALFRQVHENFKANLREHVTGMGITPHDPLKYGYVTKDYMFYQQNVKNMESCRNLELESLNDIMFE</sequence>
<dbReference type="EMBL" id="BX284605">
    <property type="protein sequence ID" value="CAA97331.2"/>
    <property type="molecule type" value="Genomic_DNA"/>
</dbReference>
<dbReference type="PIR" id="T25068">
    <property type="entry name" value="T25068"/>
</dbReference>
<dbReference type="RefSeq" id="NP_001256226.1">
    <property type="nucleotide sequence ID" value="NM_001269297.3"/>
</dbReference>
<dbReference type="SMR" id="Q22639"/>
<dbReference type="BioGRID" id="44502">
    <property type="interactions" value="5"/>
</dbReference>
<dbReference type="ComplexPortal" id="CPX-365">
    <property type="entry name" value="GARP tethering complex"/>
</dbReference>
<dbReference type="FunCoup" id="Q22639">
    <property type="interactions" value="2166"/>
</dbReference>
<dbReference type="IntAct" id="Q22639">
    <property type="interactions" value="5"/>
</dbReference>
<dbReference type="STRING" id="6239.T21C9.2a.1"/>
<dbReference type="iPTMnet" id="Q22639"/>
<dbReference type="PaxDb" id="6239-T21C9.2a"/>
<dbReference type="EnsemblMetazoa" id="T21C9.2a.1">
    <property type="protein sequence ID" value="T21C9.2a.1"/>
    <property type="gene ID" value="WBGene00006934"/>
</dbReference>
<dbReference type="GeneID" id="179473"/>
<dbReference type="KEGG" id="cel:CELE_T21C9.2"/>
<dbReference type="UCSC" id="T21C9.2">
    <property type="organism name" value="c. elegans"/>
</dbReference>
<dbReference type="AGR" id="WB:WBGene00006934"/>
<dbReference type="CTD" id="179473"/>
<dbReference type="WormBase" id="T21C9.2a">
    <property type="protein sequence ID" value="CE31365"/>
    <property type="gene ID" value="WBGene00006934"/>
    <property type="gene designation" value="vps-54"/>
</dbReference>
<dbReference type="eggNOG" id="KOG2115">
    <property type="taxonomic scope" value="Eukaryota"/>
</dbReference>
<dbReference type="GeneTree" id="ENSGT00390000000583"/>
<dbReference type="HOGENOM" id="CLU_005185_1_0_1"/>
<dbReference type="InParanoid" id="Q22639"/>
<dbReference type="OMA" id="FSFVQSY"/>
<dbReference type="OrthoDB" id="10259024at2759"/>
<dbReference type="PhylomeDB" id="Q22639"/>
<dbReference type="PRO" id="PR:Q22639"/>
<dbReference type="Proteomes" id="UP000001940">
    <property type="component" value="Chromosome V"/>
</dbReference>
<dbReference type="Bgee" id="WBGene00006934">
    <property type="expression patterns" value="Expressed in germ line (C elegans) and 4 other cell types or tissues"/>
</dbReference>
<dbReference type="ExpressionAtlas" id="Q22639">
    <property type="expression patterns" value="baseline and differential"/>
</dbReference>
<dbReference type="GO" id="GO:0005829">
    <property type="term" value="C:cytosol"/>
    <property type="evidence" value="ECO:0007669"/>
    <property type="project" value="GOC"/>
</dbReference>
<dbReference type="GO" id="GO:0000938">
    <property type="term" value="C:GARP complex"/>
    <property type="evidence" value="ECO:0000353"/>
    <property type="project" value="WormBase"/>
</dbReference>
<dbReference type="GO" id="GO:0019905">
    <property type="term" value="F:syntaxin binding"/>
    <property type="evidence" value="ECO:0000353"/>
    <property type="project" value="WormBase"/>
</dbReference>
<dbReference type="GO" id="GO:0006896">
    <property type="term" value="P:Golgi to vacuole transport"/>
    <property type="evidence" value="ECO:0000318"/>
    <property type="project" value="GO_Central"/>
</dbReference>
<dbReference type="GO" id="GO:0015031">
    <property type="term" value="P:protein transport"/>
    <property type="evidence" value="ECO:0007669"/>
    <property type="project" value="UniProtKB-KW"/>
</dbReference>
<dbReference type="GO" id="GO:0042147">
    <property type="term" value="P:retrograde transport, endosome to Golgi"/>
    <property type="evidence" value="ECO:0000318"/>
    <property type="project" value="GO_Central"/>
</dbReference>
<dbReference type="Gene3D" id="1.20.1280.130">
    <property type="match status" value="1"/>
</dbReference>
<dbReference type="Gene3D" id="6.10.250.860">
    <property type="match status" value="1"/>
</dbReference>
<dbReference type="InterPro" id="IPR039745">
    <property type="entry name" value="Vps54"/>
</dbReference>
<dbReference type="InterPro" id="IPR012501">
    <property type="entry name" value="Vps54_C"/>
</dbReference>
<dbReference type="InterPro" id="IPR019515">
    <property type="entry name" value="VPS54_N"/>
</dbReference>
<dbReference type="PANTHER" id="PTHR12965">
    <property type="entry name" value="VACUOLAR PROTEIN SORTING 54"/>
    <property type="match status" value="1"/>
</dbReference>
<dbReference type="PANTHER" id="PTHR12965:SF0">
    <property type="entry name" value="VACUOLAR PROTEIN SORTING-ASSOCIATED PROTEIN 54"/>
    <property type="match status" value="1"/>
</dbReference>
<dbReference type="Pfam" id="PF07928">
    <property type="entry name" value="Vps54"/>
    <property type="match status" value="1"/>
</dbReference>
<dbReference type="Pfam" id="PF10475">
    <property type="entry name" value="Vps54_N"/>
    <property type="match status" value="1"/>
</dbReference>
<organism>
    <name type="scientific">Caenorhabditis elegans</name>
    <dbReference type="NCBI Taxonomy" id="6239"/>
    <lineage>
        <taxon>Eukaryota</taxon>
        <taxon>Metazoa</taxon>
        <taxon>Ecdysozoa</taxon>
        <taxon>Nematoda</taxon>
        <taxon>Chromadorea</taxon>
        <taxon>Rhabditida</taxon>
        <taxon>Rhabditina</taxon>
        <taxon>Rhabditomorpha</taxon>
        <taxon>Rhabditoidea</taxon>
        <taxon>Rhabditidae</taxon>
        <taxon>Peloderinae</taxon>
        <taxon>Caenorhabditis</taxon>
    </lineage>
</organism>
<gene>
    <name evidence="5" type="primary">vps-54</name>
    <name evidence="5" type="ORF">T21C9.2</name>
</gene>
<reference key="1">
    <citation type="journal article" date="1998" name="Science">
        <title>Genome sequence of the nematode C. elegans: a platform for investigating biology.</title>
        <authorList>
            <consortium name="The C. elegans sequencing consortium"/>
        </authorList>
    </citation>
    <scope>NUCLEOTIDE SEQUENCE [LARGE SCALE GENOMIC DNA]</scope>
    <source>
        <strain>Bristol N2</strain>
    </source>
</reference>
<reference key="2">
    <citation type="journal article" date="2011" name="Mol. Biol. Cell">
        <title>The Caenorhabditis elegans GARP complex contains the conserved Vps51 subunit and is required to maintain lysosomal morphology.</title>
        <authorList>
            <person name="Luo L."/>
            <person name="Hannemann M."/>
            <person name="Koenig S."/>
            <person name="Hegermann J."/>
            <person name="Ailion M."/>
            <person name="Cho M.K."/>
            <person name="Sasidharan N."/>
            <person name="Zweckstetter M."/>
            <person name="Rensing S.A."/>
            <person name="Eimer S."/>
        </authorList>
    </citation>
    <scope>FUNCTION</scope>
    <scope>IDENTIFICATION IN THE GARP COMPLEX</scope>
    <scope>INTERACTION WITH VPS-52 AND VPS-53</scope>
    <scope>DISRUPTION PHENOTYPE</scope>
</reference>
<accession>Q22639</accession>
<protein>
    <recommendedName>
        <fullName>Vacuolar protein sorting-associated protein 54</fullName>
    </recommendedName>
</protein>
<keyword id="KW-0175">Coiled coil</keyword>
<keyword id="KW-0333">Golgi apparatus</keyword>
<keyword id="KW-0653">Protein transport</keyword>
<keyword id="KW-1185">Reference proteome</keyword>
<keyword id="KW-0813">Transport</keyword>
<proteinExistence type="evidence at protein level"/>
<evidence type="ECO:0000250" key="1"/>
<evidence type="ECO:0000255" key="2"/>
<evidence type="ECO:0000269" key="3">
    <source>
    </source>
</evidence>
<evidence type="ECO:0000305" key="4"/>
<evidence type="ECO:0000312" key="5">
    <source>
        <dbReference type="WormBase" id="T21C9.2a"/>
    </source>
</evidence>
<name>VPS54_CAEEL</name>